<feature type="chain" id="PRO_0000123645" description="Isoprenyl transferase">
    <location>
        <begin position="1"/>
        <end position="263"/>
    </location>
</feature>
<feature type="region of interest" description="Disordered" evidence="2">
    <location>
        <begin position="241"/>
        <end position="263"/>
    </location>
</feature>
<feature type="compositionally biased region" description="Polar residues" evidence="2">
    <location>
        <begin position="243"/>
        <end position="263"/>
    </location>
</feature>
<feature type="active site" evidence="1">
    <location>
        <position position="26"/>
    </location>
</feature>
<feature type="active site" description="Proton acceptor" evidence="1">
    <location>
        <position position="74"/>
    </location>
</feature>
<feature type="binding site" evidence="1">
    <location>
        <position position="26"/>
    </location>
    <ligand>
        <name>Mg(2+)</name>
        <dbReference type="ChEBI" id="CHEBI:18420"/>
    </ligand>
</feature>
<feature type="binding site" evidence="1">
    <location>
        <begin position="27"/>
        <end position="30"/>
    </location>
    <ligand>
        <name>substrate</name>
    </ligand>
</feature>
<feature type="binding site" evidence="1">
    <location>
        <position position="31"/>
    </location>
    <ligand>
        <name>substrate</name>
    </ligand>
</feature>
<feature type="binding site" evidence="1">
    <location>
        <position position="39"/>
    </location>
    <ligand>
        <name>substrate</name>
    </ligand>
</feature>
<feature type="binding site" evidence="1">
    <location>
        <position position="43"/>
    </location>
    <ligand>
        <name>substrate</name>
    </ligand>
</feature>
<feature type="binding site" evidence="1">
    <location>
        <begin position="71"/>
        <end position="73"/>
    </location>
    <ligand>
        <name>substrate</name>
    </ligand>
</feature>
<feature type="binding site" evidence="1">
    <location>
        <position position="75"/>
    </location>
    <ligand>
        <name>substrate</name>
    </ligand>
</feature>
<feature type="binding site" evidence="1">
    <location>
        <position position="77"/>
    </location>
    <ligand>
        <name>substrate</name>
    </ligand>
</feature>
<feature type="binding site" evidence="1">
    <location>
        <position position="191"/>
    </location>
    <ligand>
        <name>substrate</name>
    </ligand>
</feature>
<feature type="binding site" evidence="1">
    <location>
        <begin position="197"/>
        <end position="199"/>
    </location>
    <ligand>
        <name>substrate</name>
    </ligand>
</feature>
<feature type="binding site" evidence="1">
    <location>
        <position position="210"/>
    </location>
    <ligand>
        <name>Mg(2+)</name>
        <dbReference type="ChEBI" id="CHEBI:18420"/>
    </ligand>
</feature>
<proteinExistence type="inferred from homology"/>
<dbReference type="EC" id="2.5.1.-" evidence="1"/>
<dbReference type="EMBL" id="AL954747">
    <property type="protein sequence ID" value="CAD85625.1"/>
    <property type="molecule type" value="Genomic_DNA"/>
</dbReference>
<dbReference type="RefSeq" id="WP_011112268.1">
    <property type="nucleotide sequence ID" value="NC_004757.1"/>
</dbReference>
<dbReference type="SMR" id="Q82TZ9"/>
<dbReference type="STRING" id="228410.NE1714"/>
<dbReference type="GeneID" id="87104874"/>
<dbReference type="KEGG" id="neu:NE1714"/>
<dbReference type="eggNOG" id="COG0020">
    <property type="taxonomic scope" value="Bacteria"/>
</dbReference>
<dbReference type="HOGENOM" id="CLU_038505_1_1_4"/>
<dbReference type="OrthoDB" id="4191603at2"/>
<dbReference type="PhylomeDB" id="Q82TZ9"/>
<dbReference type="Proteomes" id="UP000001416">
    <property type="component" value="Chromosome"/>
</dbReference>
<dbReference type="GO" id="GO:0005829">
    <property type="term" value="C:cytosol"/>
    <property type="evidence" value="ECO:0007669"/>
    <property type="project" value="TreeGrafter"/>
</dbReference>
<dbReference type="GO" id="GO:0008834">
    <property type="term" value="F:ditrans,polycis-undecaprenyl-diphosphate synthase [(2E,6E)-farnesyl-diphosphate specific] activity"/>
    <property type="evidence" value="ECO:0007669"/>
    <property type="project" value="TreeGrafter"/>
</dbReference>
<dbReference type="GO" id="GO:0000287">
    <property type="term" value="F:magnesium ion binding"/>
    <property type="evidence" value="ECO:0007669"/>
    <property type="project" value="UniProtKB-UniRule"/>
</dbReference>
<dbReference type="GO" id="GO:0016094">
    <property type="term" value="P:polyprenol biosynthetic process"/>
    <property type="evidence" value="ECO:0007669"/>
    <property type="project" value="TreeGrafter"/>
</dbReference>
<dbReference type="CDD" id="cd00475">
    <property type="entry name" value="Cis_IPPS"/>
    <property type="match status" value="1"/>
</dbReference>
<dbReference type="FunFam" id="3.40.1180.10:FF:000001">
    <property type="entry name" value="(2E,6E)-farnesyl-diphosphate-specific ditrans,polycis-undecaprenyl-diphosphate synthase"/>
    <property type="match status" value="1"/>
</dbReference>
<dbReference type="Gene3D" id="3.40.1180.10">
    <property type="entry name" value="Decaprenyl diphosphate synthase-like"/>
    <property type="match status" value="1"/>
</dbReference>
<dbReference type="HAMAP" id="MF_01139">
    <property type="entry name" value="ISPT"/>
    <property type="match status" value="1"/>
</dbReference>
<dbReference type="InterPro" id="IPR001441">
    <property type="entry name" value="UPP_synth-like"/>
</dbReference>
<dbReference type="InterPro" id="IPR018520">
    <property type="entry name" value="UPP_synth-like_CS"/>
</dbReference>
<dbReference type="InterPro" id="IPR036424">
    <property type="entry name" value="UPP_synth-like_sf"/>
</dbReference>
<dbReference type="NCBIfam" id="TIGR00055">
    <property type="entry name" value="uppS"/>
    <property type="match status" value="1"/>
</dbReference>
<dbReference type="PANTHER" id="PTHR10291:SF0">
    <property type="entry name" value="DEHYDRODOLICHYL DIPHOSPHATE SYNTHASE 2"/>
    <property type="match status" value="1"/>
</dbReference>
<dbReference type="PANTHER" id="PTHR10291">
    <property type="entry name" value="DEHYDRODOLICHYL DIPHOSPHATE SYNTHASE FAMILY MEMBER"/>
    <property type="match status" value="1"/>
</dbReference>
<dbReference type="Pfam" id="PF01255">
    <property type="entry name" value="Prenyltransf"/>
    <property type="match status" value="1"/>
</dbReference>
<dbReference type="SUPFAM" id="SSF64005">
    <property type="entry name" value="Undecaprenyl diphosphate synthase"/>
    <property type="match status" value="1"/>
</dbReference>
<dbReference type="PROSITE" id="PS01066">
    <property type="entry name" value="UPP_SYNTHASE"/>
    <property type="match status" value="1"/>
</dbReference>
<organism>
    <name type="scientific">Nitrosomonas europaea (strain ATCC 19718 / CIP 103999 / KCTC 2705 / NBRC 14298)</name>
    <dbReference type="NCBI Taxonomy" id="228410"/>
    <lineage>
        <taxon>Bacteria</taxon>
        <taxon>Pseudomonadati</taxon>
        <taxon>Pseudomonadota</taxon>
        <taxon>Betaproteobacteria</taxon>
        <taxon>Nitrosomonadales</taxon>
        <taxon>Nitrosomonadaceae</taxon>
        <taxon>Nitrosomonas</taxon>
    </lineage>
</organism>
<sequence length="263" mass="29579">MPLTPSSTRGIPETGAIPKHIAIIMDGNGRWARKRFLPRIAGHTQGVEAVRGTIKACIERGVSHLTIFAFSSENWRRPAEEVKLLMQLFLAALEREVTGLHENGVRFRVIGDISKFDPKIVDFVQQGEALTAGNSRLNFTVAANYGGRWDIMQAVRKMITENPDSAVTFDEPDIARHLALADAPEPDLFIRTGGECRISNFLLWQLAYTELYFTDTLWPDFDASALDEAIASYRKRERRFGRTSEQIAGQQENKNTVSNEDRV</sequence>
<comment type="function">
    <text evidence="1">Catalyzes the condensation of isopentenyl diphosphate (IPP) with allylic pyrophosphates generating different type of terpenoids.</text>
</comment>
<comment type="cofactor">
    <cofactor evidence="1">
        <name>Mg(2+)</name>
        <dbReference type="ChEBI" id="CHEBI:18420"/>
    </cofactor>
    <text evidence="1">Binds 2 magnesium ions per subunit.</text>
</comment>
<comment type="subunit">
    <text evidence="1">Homodimer.</text>
</comment>
<comment type="similarity">
    <text evidence="1">Belongs to the UPP synthase family.</text>
</comment>
<reference key="1">
    <citation type="journal article" date="2003" name="J. Bacteriol.">
        <title>Complete genome sequence of the ammonia-oxidizing bacterium and obligate chemolithoautotroph Nitrosomonas europaea.</title>
        <authorList>
            <person name="Chain P."/>
            <person name="Lamerdin J.E."/>
            <person name="Larimer F.W."/>
            <person name="Regala W."/>
            <person name="Lao V."/>
            <person name="Land M.L."/>
            <person name="Hauser L."/>
            <person name="Hooper A.B."/>
            <person name="Klotz M.G."/>
            <person name="Norton J."/>
            <person name="Sayavedra-Soto L.A."/>
            <person name="Arciero D.M."/>
            <person name="Hommes N.G."/>
            <person name="Whittaker M.M."/>
            <person name="Arp D.J."/>
        </authorList>
    </citation>
    <scope>NUCLEOTIDE SEQUENCE [LARGE SCALE GENOMIC DNA]</scope>
    <source>
        <strain>ATCC 19718 / CIP 103999 / KCTC 2705 / NBRC 14298</strain>
    </source>
</reference>
<keyword id="KW-0460">Magnesium</keyword>
<keyword id="KW-0479">Metal-binding</keyword>
<keyword id="KW-1185">Reference proteome</keyword>
<keyword id="KW-0808">Transferase</keyword>
<accession>Q82TZ9</accession>
<protein>
    <recommendedName>
        <fullName evidence="1">Isoprenyl transferase</fullName>
        <ecNumber evidence="1">2.5.1.-</ecNumber>
    </recommendedName>
</protein>
<evidence type="ECO:0000255" key="1">
    <source>
        <dbReference type="HAMAP-Rule" id="MF_01139"/>
    </source>
</evidence>
<evidence type="ECO:0000256" key="2">
    <source>
        <dbReference type="SAM" id="MobiDB-lite"/>
    </source>
</evidence>
<name>ISPT_NITEU</name>
<gene>
    <name evidence="1" type="primary">uppS</name>
    <name type="ordered locus">NE1714</name>
</gene>